<protein>
    <recommendedName>
        <fullName evidence="1">L-rhamnonate dehydratase</fullName>
        <shortName evidence="1">RhamD</shortName>
        <ecNumber evidence="1">4.2.1.90</ecNumber>
    </recommendedName>
</protein>
<reference key="1">
    <citation type="submission" date="2006-08" db="EMBL/GenBank/DDBJ databases">
        <title>Complete sequence of chromosome 3 of Burkholderia cenocepacia HI2424.</title>
        <authorList>
            <person name="Copeland A."/>
            <person name="Lucas S."/>
            <person name="Lapidus A."/>
            <person name="Barry K."/>
            <person name="Detter J.C."/>
            <person name="Glavina del Rio T."/>
            <person name="Hammon N."/>
            <person name="Israni S."/>
            <person name="Pitluck S."/>
            <person name="Chain P."/>
            <person name="Malfatti S."/>
            <person name="Shin M."/>
            <person name="Vergez L."/>
            <person name="Schmutz J."/>
            <person name="Larimer F."/>
            <person name="Land M."/>
            <person name="Hauser L."/>
            <person name="Kyrpides N."/>
            <person name="Kim E."/>
            <person name="LiPuma J.J."/>
            <person name="Gonzalez C.F."/>
            <person name="Konstantinidis K."/>
            <person name="Tiedje J.M."/>
            <person name="Richardson P."/>
        </authorList>
    </citation>
    <scope>NUCLEOTIDE SEQUENCE [LARGE SCALE GENOMIC DNA]</scope>
    <source>
        <strain>HI2424</strain>
    </source>
</reference>
<evidence type="ECO:0000255" key="1">
    <source>
        <dbReference type="HAMAP-Rule" id="MF_01288"/>
    </source>
</evidence>
<accession>A0KDV2</accession>
<feature type="chain" id="PRO_0000351685" description="L-rhamnonate dehydratase">
    <location>
        <begin position="1"/>
        <end position="392"/>
    </location>
</feature>
<feature type="active site" description="Proton acceptor" evidence="1">
    <location>
        <position position="318"/>
    </location>
</feature>
<feature type="binding site" evidence="1">
    <location>
        <position position="22"/>
    </location>
    <ligand>
        <name>substrate</name>
    </ligand>
</feature>
<feature type="binding site" evidence="1">
    <location>
        <position position="48"/>
    </location>
    <ligand>
        <name>substrate</name>
    </ligand>
</feature>
<feature type="binding site" evidence="1">
    <location>
        <position position="214"/>
    </location>
    <ligand>
        <name>Mg(2+)</name>
        <dbReference type="ChEBI" id="CHEBI:18420"/>
    </ligand>
</feature>
<feature type="binding site" evidence="1">
    <location>
        <position position="240"/>
    </location>
    <ligand>
        <name>Mg(2+)</name>
        <dbReference type="ChEBI" id="CHEBI:18420"/>
    </ligand>
</feature>
<feature type="binding site" evidence="1">
    <location>
        <position position="268"/>
    </location>
    <ligand>
        <name>Mg(2+)</name>
        <dbReference type="ChEBI" id="CHEBI:18420"/>
    </ligand>
</feature>
<feature type="binding site" evidence="1">
    <location>
        <position position="338"/>
    </location>
    <ligand>
        <name>substrate</name>
    </ligand>
</feature>
<feature type="site" description="Increases basicity of active site His" evidence="1">
    <location>
        <position position="291"/>
    </location>
</feature>
<feature type="site" description="Transition state stabilizer" evidence="1">
    <location>
        <position position="338"/>
    </location>
</feature>
<proteinExistence type="inferred from homology"/>
<keyword id="KW-0456">Lyase</keyword>
<keyword id="KW-0460">Magnesium</keyword>
<keyword id="KW-0479">Metal-binding</keyword>
<organism>
    <name type="scientific">Burkholderia cenocepacia (strain HI2424)</name>
    <dbReference type="NCBI Taxonomy" id="331272"/>
    <lineage>
        <taxon>Bacteria</taxon>
        <taxon>Pseudomonadati</taxon>
        <taxon>Pseudomonadota</taxon>
        <taxon>Betaproteobacteria</taxon>
        <taxon>Burkholderiales</taxon>
        <taxon>Burkholderiaceae</taxon>
        <taxon>Burkholderia</taxon>
        <taxon>Burkholderia cepacia complex</taxon>
    </lineage>
</organism>
<name>RHMD_BURCH</name>
<gene>
    <name evidence="1" type="primary">rhmD</name>
    <name type="ordered locus">Bcen2424_6636</name>
</gene>
<dbReference type="EC" id="4.2.1.90" evidence="1"/>
<dbReference type="EMBL" id="CP000460">
    <property type="protein sequence ID" value="ABK13365.1"/>
    <property type="molecule type" value="Genomic_DNA"/>
</dbReference>
<dbReference type="RefSeq" id="WP_011549800.1">
    <property type="nucleotide sequence ID" value="NC_008544.1"/>
</dbReference>
<dbReference type="SMR" id="A0KDV2"/>
<dbReference type="KEGG" id="bch:Bcen2424_6636"/>
<dbReference type="HOGENOM" id="CLU_030273_1_0_4"/>
<dbReference type="GO" id="GO:0050032">
    <property type="term" value="F:L-rhamnonate dehydratase activity"/>
    <property type="evidence" value="ECO:0007669"/>
    <property type="project" value="UniProtKB-UniRule"/>
</dbReference>
<dbReference type="GO" id="GO:0000287">
    <property type="term" value="F:magnesium ion binding"/>
    <property type="evidence" value="ECO:0007669"/>
    <property type="project" value="UniProtKB-UniRule"/>
</dbReference>
<dbReference type="GO" id="GO:0009063">
    <property type="term" value="P:amino acid catabolic process"/>
    <property type="evidence" value="ECO:0007669"/>
    <property type="project" value="InterPro"/>
</dbReference>
<dbReference type="GO" id="GO:0016052">
    <property type="term" value="P:carbohydrate catabolic process"/>
    <property type="evidence" value="ECO:0007669"/>
    <property type="project" value="TreeGrafter"/>
</dbReference>
<dbReference type="CDD" id="cd03327">
    <property type="entry name" value="MR_like_2"/>
    <property type="match status" value="1"/>
</dbReference>
<dbReference type="FunFam" id="3.20.20.120:FF:000005">
    <property type="entry name" value="Putative L-rhamnonate dehydratase"/>
    <property type="match status" value="1"/>
</dbReference>
<dbReference type="Gene3D" id="3.20.20.120">
    <property type="entry name" value="Enolase-like C-terminal domain"/>
    <property type="match status" value="1"/>
</dbReference>
<dbReference type="Gene3D" id="3.30.390.10">
    <property type="entry name" value="Enolase-like, N-terminal domain"/>
    <property type="match status" value="1"/>
</dbReference>
<dbReference type="HAMAP" id="MF_01288">
    <property type="entry name" value="Rhamnon_dehydrat"/>
    <property type="match status" value="1"/>
</dbReference>
<dbReference type="InterPro" id="IPR036849">
    <property type="entry name" value="Enolase-like_C_sf"/>
</dbReference>
<dbReference type="InterPro" id="IPR029017">
    <property type="entry name" value="Enolase-like_N"/>
</dbReference>
<dbReference type="InterPro" id="IPR029065">
    <property type="entry name" value="Enolase_C-like"/>
</dbReference>
<dbReference type="InterPro" id="IPR023444">
    <property type="entry name" value="L-Rhamnon_dehydrat"/>
</dbReference>
<dbReference type="InterPro" id="IPR018110">
    <property type="entry name" value="Mandel_Rmase/mucon_lact_enz_CS"/>
</dbReference>
<dbReference type="InterPro" id="IPR013342">
    <property type="entry name" value="Mandelate_racemase_C"/>
</dbReference>
<dbReference type="InterPro" id="IPR013341">
    <property type="entry name" value="Mandelate_racemase_N_dom"/>
</dbReference>
<dbReference type="InterPro" id="IPR046945">
    <property type="entry name" value="RHMD-like"/>
</dbReference>
<dbReference type="NCBIfam" id="NF011968">
    <property type="entry name" value="PRK15440.1"/>
    <property type="match status" value="1"/>
</dbReference>
<dbReference type="PANTHER" id="PTHR13794">
    <property type="entry name" value="ENOLASE SUPERFAMILY, MANDELATE RACEMASE"/>
    <property type="match status" value="1"/>
</dbReference>
<dbReference type="PANTHER" id="PTHR13794:SF58">
    <property type="entry name" value="MITOCHONDRIAL ENOLASE SUPERFAMILY MEMBER 1"/>
    <property type="match status" value="1"/>
</dbReference>
<dbReference type="Pfam" id="PF13378">
    <property type="entry name" value="MR_MLE_C"/>
    <property type="match status" value="1"/>
</dbReference>
<dbReference type="Pfam" id="PF02746">
    <property type="entry name" value="MR_MLE_N"/>
    <property type="match status" value="1"/>
</dbReference>
<dbReference type="SFLD" id="SFLDG00179">
    <property type="entry name" value="mandelate_racemase"/>
    <property type="match status" value="1"/>
</dbReference>
<dbReference type="SFLD" id="SFLDF00006">
    <property type="entry name" value="rhamnonate_dehydratase"/>
    <property type="match status" value="1"/>
</dbReference>
<dbReference type="SMART" id="SM00922">
    <property type="entry name" value="MR_MLE"/>
    <property type="match status" value="1"/>
</dbReference>
<dbReference type="SUPFAM" id="SSF51604">
    <property type="entry name" value="Enolase C-terminal domain-like"/>
    <property type="match status" value="1"/>
</dbReference>
<dbReference type="SUPFAM" id="SSF54826">
    <property type="entry name" value="Enolase N-terminal domain-like"/>
    <property type="match status" value="1"/>
</dbReference>
<dbReference type="PROSITE" id="PS00908">
    <property type="entry name" value="MR_MLE_1"/>
    <property type="match status" value="1"/>
</dbReference>
<sequence length="392" mass="43896">MSMPTIRAVRALTVRGGGADYHDQDAGHWIDDHIATPMSRYPEYRQSRQSFGINVLGTLVIEVEASDGTVGFAVTTGGEIGAFIVERHLARFIEGQRVTDIEKMWDQMFHATLYYGRKGVVLNAISGVDLALWDLLAKVRREPVHQLLGGKVRDELEFYATGARPDLAKEMGFIGGKLPLHHGPAEGEAGLRRNLDALADMRSRVGADFWLMLDCWMSLDVPYATRLAHEAHALGLKWIEECLPPDDYWGYAKLRRDVPRGMLVTTGEHEATRWGFRMLLEMECCDIIQPDVGWCGGLTELMRISALADARGVLVIPHGSSVYSYHFVTTRHNSPFAEFLMMAPQADRVVPMFDPLLLDEPVPVGGRMKVPDTPGFGVRLNPDVRMQRPYEH</sequence>
<comment type="function">
    <text evidence="1">Catalyzes the dehydration of L-rhamnonate to 2-keto-3-deoxy-L-rhamnonate (KDR).</text>
</comment>
<comment type="catalytic activity">
    <reaction evidence="1">
        <text>L-rhamnonate = 2-dehydro-3-deoxy-L-rhamnonate + H2O</text>
        <dbReference type="Rhea" id="RHEA:23080"/>
        <dbReference type="ChEBI" id="CHEBI:15377"/>
        <dbReference type="ChEBI" id="CHEBI:58118"/>
        <dbReference type="ChEBI" id="CHEBI:58371"/>
        <dbReference type="EC" id="4.2.1.90"/>
    </reaction>
</comment>
<comment type="cofactor">
    <cofactor evidence="1">
        <name>Mg(2+)</name>
        <dbReference type="ChEBI" id="CHEBI:18420"/>
    </cofactor>
    <text evidence="1">Binds 1 Mg(2+) ion per subunit.</text>
</comment>
<comment type="subunit">
    <text evidence="1">Homooctamer; tetramer of dimers.</text>
</comment>
<comment type="miscellaneous">
    <text evidence="1">Reaction proceeds via a syn dehydration.</text>
</comment>
<comment type="similarity">
    <text evidence="1">Belongs to the mandelate racemase/muconate lactonizing enzyme family. RhamD subfamily.</text>
</comment>